<protein>
    <recommendedName>
        <fullName evidence="7">Importin subunit alpha-6</fullName>
        <shortName evidence="6">IMPa-6</shortName>
    </recommendedName>
</protein>
<accession>Q9FWY7</accession>
<evidence type="ECO:0000250" key="1">
    <source>
        <dbReference type="UniProtKB" id="Q96321"/>
    </source>
</evidence>
<evidence type="ECO:0000255" key="2"/>
<evidence type="ECO:0000255" key="3">
    <source>
        <dbReference type="PROSITE-ProRule" id="PRU00561"/>
    </source>
</evidence>
<evidence type="ECO:0000256" key="4">
    <source>
        <dbReference type="SAM" id="MobiDB-lite"/>
    </source>
</evidence>
<evidence type="ECO:0000269" key="5">
    <source>
    </source>
</evidence>
<evidence type="ECO:0000303" key="6">
    <source>
    </source>
</evidence>
<evidence type="ECO:0000305" key="7"/>
<evidence type="ECO:0000312" key="8">
    <source>
        <dbReference type="Araport" id="AT1G02690"/>
    </source>
</evidence>
<evidence type="ECO:0000312" key="9">
    <source>
        <dbReference type="EMBL" id="AAG10631.1"/>
    </source>
</evidence>
<dbReference type="EMBL" id="AC022521">
    <property type="protein sequence ID" value="AAG10631.1"/>
    <property type="molecule type" value="Genomic_DNA"/>
</dbReference>
<dbReference type="EMBL" id="CP002684">
    <property type="protein sequence ID" value="AEE27458.1"/>
    <property type="molecule type" value="Genomic_DNA"/>
</dbReference>
<dbReference type="EMBL" id="AY070068">
    <property type="protein sequence ID" value="AAL49825.1"/>
    <property type="molecule type" value="mRNA"/>
</dbReference>
<dbReference type="EMBL" id="AY096437">
    <property type="protein sequence ID" value="AAM20077.1"/>
    <property type="molecule type" value="mRNA"/>
</dbReference>
<dbReference type="PIR" id="A86157">
    <property type="entry name" value="A86157"/>
</dbReference>
<dbReference type="RefSeq" id="NP_171769.1">
    <molecule id="Q9FWY7-1"/>
    <property type="nucleotide sequence ID" value="NM_100149.4"/>
</dbReference>
<dbReference type="SMR" id="Q9FWY7"/>
<dbReference type="FunCoup" id="Q9FWY7">
    <property type="interactions" value="3447"/>
</dbReference>
<dbReference type="IntAct" id="Q9FWY7">
    <property type="interactions" value="45"/>
</dbReference>
<dbReference type="STRING" id="3702.Q9FWY7"/>
<dbReference type="PaxDb" id="3702-AT1G02690.2"/>
<dbReference type="ProteomicsDB" id="248450">
    <molecule id="Q9FWY7-1"/>
</dbReference>
<dbReference type="EnsemblPlants" id="AT1G02690.1">
    <molecule id="Q9FWY7-1"/>
    <property type="protein sequence ID" value="AT1G02690.1"/>
    <property type="gene ID" value="AT1G02690"/>
</dbReference>
<dbReference type="GeneID" id="839517"/>
<dbReference type="Gramene" id="AT1G02690.1">
    <molecule id="Q9FWY7-1"/>
    <property type="protein sequence ID" value="AT1G02690.1"/>
    <property type="gene ID" value="AT1G02690"/>
</dbReference>
<dbReference type="KEGG" id="ath:AT1G02690"/>
<dbReference type="Araport" id="AT1G02690"/>
<dbReference type="TAIR" id="AT1G02690">
    <property type="gene designation" value="IMPA-6"/>
</dbReference>
<dbReference type="eggNOG" id="KOG0166">
    <property type="taxonomic scope" value="Eukaryota"/>
</dbReference>
<dbReference type="HOGENOM" id="CLU_018084_5_0_1"/>
<dbReference type="InParanoid" id="Q9FWY7"/>
<dbReference type="PhylomeDB" id="Q9FWY7"/>
<dbReference type="CD-CODE" id="4299E36E">
    <property type="entry name" value="Nucleolus"/>
</dbReference>
<dbReference type="PRO" id="PR:Q9FWY7"/>
<dbReference type="Proteomes" id="UP000006548">
    <property type="component" value="Chromosome 1"/>
</dbReference>
<dbReference type="ExpressionAtlas" id="Q9FWY7">
    <property type="expression patterns" value="baseline and differential"/>
</dbReference>
<dbReference type="GO" id="GO:0005737">
    <property type="term" value="C:cytoplasm"/>
    <property type="evidence" value="ECO:0007669"/>
    <property type="project" value="InterPro"/>
</dbReference>
<dbReference type="GO" id="GO:0005635">
    <property type="term" value="C:nuclear envelope"/>
    <property type="evidence" value="ECO:0007669"/>
    <property type="project" value="UniProtKB-SubCell"/>
</dbReference>
<dbReference type="GO" id="GO:0061608">
    <property type="term" value="F:nuclear import signal receptor activity"/>
    <property type="evidence" value="ECO:0007669"/>
    <property type="project" value="InterPro"/>
</dbReference>
<dbReference type="GO" id="GO:0006606">
    <property type="term" value="P:protein import into nucleus"/>
    <property type="evidence" value="ECO:0007669"/>
    <property type="project" value="InterPro"/>
</dbReference>
<dbReference type="FunFam" id="1.20.5.690:FF:000002">
    <property type="entry name" value="Importin subunit alpha"/>
    <property type="match status" value="1"/>
</dbReference>
<dbReference type="FunFam" id="1.25.10.10:FF:000040">
    <property type="entry name" value="Importin subunit alpha"/>
    <property type="match status" value="1"/>
</dbReference>
<dbReference type="Gene3D" id="1.20.5.690">
    <property type="entry name" value="Importin-alpha, importin-beta-binding domain"/>
    <property type="match status" value="1"/>
</dbReference>
<dbReference type="Gene3D" id="1.25.10.10">
    <property type="entry name" value="Leucine-rich Repeat Variant"/>
    <property type="match status" value="1"/>
</dbReference>
<dbReference type="InterPro" id="IPR011989">
    <property type="entry name" value="ARM-like"/>
</dbReference>
<dbReference type="InterPro" id="IPR016024">
    <property type="entry name" value="ARM-type_fold"/>
</dbReference>
<dbReference type="InterPro" id="IPR032413">
    <property type="entry name" value="Arm_3"/>
</dbReference>
<dbReference type="InterPro" id="IPR000225">
    <property type="entry name" value="Armadillo"/>
</dbReference>
<dbReference type="InterPro" id="IPR002652">
    <property type="entry name" value="Importin-a_IBB"/>
</dbReference>
<dbReference type="InterPro" id="IPR036975">
    <property type="entry name" value="Importin-a_IBB_sf"/>
</dbReference>
<dbReference type="InterPro" id="IPR024931">
    <property type="entry name" value="Importin_alpha"/>
</dbReference>
<dbReference type="PANTHER" id="PTHR23316">
    <property type="entry name" value="IMPORTIN ALPHA"/>
    <property type="match status" value="1"/>
</dbReference>
<dbReference type="Pfam" id="PF00514">
    <property type="entry name" value="Arm"/>
    <property type="match status" value="7"/>
</dbReference>
<dbReference type="Pfam" id="PF16186">
    <property type="entry name" value="Arm_3"/>
    <property type="match status" value="1"/>
</dbReference>
<dbReference type="Pfam" id="PF01749">
    <property type="entry name" value="IBB"/>
    <property type="match status" value="1"/>
</dbReference>
<dbReference type="PIRSF" id="PIRSF005673">
    <property type="entry name" value="Importin_alpha"/>
    <property type="match status" value="1"/>
</dbReference>
<dbReference type="SMART" id="SM00185">
    <property type="entry name" value="ARM"/>
    <property type="match status" value="8"/>
</dbReference>
<dbReference type="SUPFAM" id="SSF48371">
    <property type="entry name" value="ARM repeat"/>
    <property type="match status" value="1"/>
</dbReference>
<dbReference type="PROSITE" id="PS50176">
    <property type="entry name" value="ARM_REPEAT"/>
    <property type="match status" value="5"/>
</dbReference>
<dbReference type="PROSITE" id="PS51214">
    <property type="entry name" value="IBB"/>
    <property type="match status" value="1"/>
</dbReference>
<feature type="chain" id="PRO_0000431572" description="Importin subunit alpha-6">
    <location>
        <begin position="1"/>
        <end position="538"/>
    </location>
</feature>
<feature type="domain" description="IBB" evidence="3">
    <location>
        <begin position="1"/>
        <end position="58"/>
    </location>
</feature>
<feature type="repeat" description="ARM 1" evidence="2">
    <location>
        <begin position="109"/>
        <end position="149"/>
    </location>
</feature>
<feature type="repeat" description="ARM 2" evidence="2">
    <location>
        <begin position="152"/>
        <end position="191"/>
    </location>
</feature>
<feature type="repeat" description="ARM 3" evidence="2">
    <location>
        <begin position="194"/>
        <end position="234"/>
    </location>
</feature>
<feature type="repeat" description="ARM 4" evidence="2">
    <location>
        <begin position="236"/>
        <end position="275"/>
    </location>
</feature>
<feature type="repeat" description="ARM 5" evidence="2">
    <location>
        <begin position="278"/>
        <end position="317"/>
    </location>
</feature>
<feature type="repeat" description="ARM 6" evidence="2">
    <location>
        <begin position="320"/>
        <end position="360"/>
    </location>
</feature>
<feature type="repeat" description="ARM 7" evidence="2">
    <location>
        <begin position="363"/>
        <end position="402"/>
    </location>
</feature>
<feature type="repeat" description="ARM 8" evidence="2">
    <location>
        <begin position="406"/>
        <end position="445"/>
    </location>
</feature>
<feature type="region of interest" description="Disordered" evidence="4">
    <location>
        <begin position="1"/>
        <end position="69"/>
    </location>
</feature>
<feature type="compositionally biased region" description="Basic and acidic residues" evidence="4">
    <location>
        <begin position="7"/>
        <end position="46"/>
    </location>
</feature>
<feature type="compositionally biased region" description="Polar residues" evidence="4">
    <location>
        <begin position="56"/>
        <end position="69"/>
    </location>
</feature>
<proteinExistence type="evidence at protein level"/>
<keyword id="KW-0025">Alternative splicing</keyword>
<keyword id="KW-0539">Nucleus</keyword>
<keyword id="KW-0653">Protein transport</keyword>
<keyword id="KW-1185">Reference proteome</keyword>
<keyword id="KW-0677">Repeat</keyword>
<keyword id="KW-0813">Transport</keyword>
<comment type="function">
    <text evidence="1 5">Binds to conventional NLS motifs and mediates nuclear protein import across the nuclear envelope (By similarity). Acts as a cellular receptor for the nuclear import of the virD2 protein of Agrobacterium, but is not essential for Agrobacterium-mediated root transformation (PubMed:18836040).</text>
</comment>
<comment type="subunit">
    <text evidence="1">Forms a complex with importin subunit beta-1.</text>
</comment>
<comment type="interaction">
    <interactant intactId="EBI-4431755">
        <id>Q9FWY7</id>
    </interactant>
    <interactant intactId="EBI-1786840">
        <id>O82132</id>
        <label>DREB2A</label>
    </interactant>
    <organismsDiffer>false</organismsDiffer>
    <experiments>3</experiments>
</comment>
<comment type="interaction">
    <interactant intactId="EBI-4431755">
        <id>Q9FWY7</id>
    </interactant>
    <interactant intactId="EBI-25513208">
        <id>Q39101</id>
        <label>FER1</label>
    </interactant>
    <organismsDiffer>false</organismsDiffer>
    <experiments>3</experiments>
</comment>
<comment type="interaction">
    <interactant intactId="EBI-4431755">
        <id>Q9FWY7</id>
    </interactant>
    <interactant intactId="EBI-617608">
        <id>Q38830</id>
        <label>IAA12</label>
    </interactant>
    <organismsDiffer>false</organismsDiffer>
    <experiments>3</experiments>
</comment>
<comment type="interaction">
    <interactant intactId="EBI-4431755">
        <id>Q9FWY7</id>
    </interactant>
    <interactant intactId="EBI-632243">
        <id>P93830</id>
        <label>IAA17</label>
    </interactant>
    <organismsDiffer>false</organismsDiffer>
    <experiments>3</experiments>
</comment>
<comment type="interaction">
    <interactant intactId="EBI-4431755">
        <id>Q9FWY7</id>
    </interactant>
    <interactant intactId="EBI-4446992">
        <id>O81313</id>
        <label>IND</label>
    </interactant>
    <organismsDiffer>false</organismsDiffer>
    <experiments>3</experiments>
</comment>
<comment type="subcellular location">
    <subcellularLocation>
        <location evidence="1">Nucleus envelope</location>
    </subcellularLocation>
</comment>
<comment type="alternative products">
    <event type="alternative splicing"/>
    <isoform>
        <id>Q9FWY7-1</id>
        <name>1</name>
        <sequence type="displayed"/>
    </isoform>
    <text evidence="7">A number of isoforms are produced. According to EST sequences.</text>
</comment>
<comment type="similarity">
    <text evidence="7">Belongs to the importin alpha family.</text>
</comment>
<name>IMPA6_ARATH</name>
<gene>
    <name evidence="6" type="primary">IMPA6</name>
    <name evidence="8" type="ordered locus">At1g02690</name>
    <name evidence="9" type="ORF">T14P4.3</name>
</gene>
<sequence>MSYKPSAKTEVRRNRYKVSVDADEGRRRREDNMVEIRKNKREENLQKKRREGFNPSMASQPGQDFSSSLPTETRLENIQQMIAGVMSEDRDLQLEATASFRRLLSIERNPPINEVVQSGVVPHIVQFLSRDDFTQLQFEAAWALTNIASGTSENTRVIIDSGAVPLFVKLLSSASEEVREQAVWALGNVAGDSPKCRDHVLSCEAMMSLLAQFHEHSKLSMLRNATWTLSNFCRGKPQPAFEQTKAALPALERLLHSTDEEVLTDASWALSYLSDGTNEKIQTVIDAGVIPRLVQLLAHPSPSVLIPALRTIGNIVTGDDIQTQAVISSQALPGLLNLLKNTYKKSIKKEACWTISNITAGNTSQIQEVFQAGIIRPLINLLEIGEFEIKKEAVWAISNATSGGNHDQIKFLVSQGCIRPLCDLLPCPDPRVVTVTLEGLENILKVGEAEKNLGNTGNDNLYAQMIEDADGLDKIENLQSHDNNEIYEKAVKILESYWAADDEEEDIGGVDAPENVQSSGFQFGNQSGNAPTGGFNFG</sequence>
<reference key="1">
    <citation type="journal article" date="2000" name="Nature">
        <title>Sequence and analysis of chromosome 1 of the plant Arabidopsis thaliana.</title>
        <authorList>
            <person name="Theologis A."/>
            <person name="Ecker J.R."/>
            <person name="Palm C.J."/>
            <person name="Federspiel N.A."/>
            <person name="Kaul S."/>
            <person name="White O."/>
            <person name="Alonso J."/>
            <person name="Altafi H."/>
            <person name="Araujo R."/>
            <person name="Bowman C.L."/>
            <person name="Brooks S.Y."/>
            <person name="Buehler E."/>
            <person name="Chan A."/>
            <person name="Chao Q."/>
            <person name="Chen H."/>
            <person name="Cheuk R.F."/>
            <person name="Chin C.W."/>
            <person name="Chung M.K."/>
            <person name="Conn L."/>
            <person name="Conway A.B."/>
            <person name="Conway A.R."/>
            <person name="Creasy T.H."/>
            <person name="Dewar K."/>
            <person name="Dunn P."/>
            <person name="Etgu P."/>
            <person name="Feldblyum T.V."/>
            <person name="Feng J.-D."/>
            <person name="Fong B."/>
            <person name="Fujii C.Y."/>
            <person name="Gill J.E."/>
            <person name="Goldsmith A.D."/>
            <person name="Haas B."/>
            <person name="Hansen N.F."/>
            <person name="Hughes B."/>
            <person name="Huizar L."/>
            <person name="Hunter J.L."/>
            <person name="Jenkins J."/>
            <person name="Johnson-Hopson C."/>
            <person name="Khan S."/>
            <person name="Khaykin E."/>
            <person name="Kim C.J."/>
            <person name="Koo H.L."/>
            <person name="Kremenetskaia I."/>
            <person name="Kurtz D.B."/>
            <person name="Kwan A."/>
            <person name="Lam B."/>
            <person name="Langin-Hooper S."/>
            <person name="Lee A."/>
            <person name="Lee J.M."/>
            <person name="Lenz C.A."/>
            <person name="Li J.H."/>
            <person name="Li Y.-P."/>
            <person name="Lin X."/>
            <person name="Liu S.X."/>
            <person name="Liu Z.A."/>
            <person name="Luros J.S."/>
            <person name="Maiti R."/>
            <person name="Marziali A."/>
            <person name="Militscher J."/>
            <person name="Miranda M."/>
            <person name="Nguyen M."/>
            <person name="Nierman W.C."/>
            <person name="Osborne B.I."/>
            <person name="Pai G."/>
            <person name="Peterson J."/>
            <person name="Pham P.K."/>
            <person name="Rizzo M."/>
            <person name="Rooney T."/>
            <person name="Rowley D."/>
            <person name="Sakano H."/>
            <person name="Salzberg S.L."/>
            <person name="Schwartz J.R."/>
            <person name="Shinn P."/>
            <person name="Southwick A.M."/>
            <person name="Sun H."/>
            <person name="Tallon L.J."/>
            <person name="Tambunga G."/>
            <person name="Toriumi M.J."/>
            <person name="Town C.D."/>
            <person name="Utterback T."/>
            <person name="Van Aken S."/>
            <person name="Vaysberg M."/>
            <person name="Vysotskaia V.S."/>
            <person name="Walker M."/>
            <person name="Wu D."/>
            <person name="Yu G."/>
            <person name="Fraser C.M."/>
            <person name="Venter J.C."/>
            <person name="Davis R.W."/>
        </authorList>
    </citation>
    <scope>NUCLEOTIDE SEQUENCE [LARGE SCALE GENOMIC DNA]</scope>
    <source>
        <strain>cv. Columbia</strain>
    </source>
</reference>
<reference key="2">
    <citation type="journal article" date="2017" name="Plant J.">
        <title>Araport11: a complete reannotation of the Arabidopsis thaliana reference genome.</title>
        <authorList>
            <person name="Cheng C.Y."/>
            <person name="Krishnakumar V."/>
            <person name="Chan A.P."/>
            <person name="Thibaud-Nissen F."/>
            <person name="Schobel S."/>
            <person name="Town C.D."/>
        </authorList>
    </citation>
    <scope>GENOME REANNOTATION</scope>
    <source>
        <strain>cv. Columbia</strain>
    </source>
</reference>
<reference key="3">
    <citation type="journal article" date="2003" name="Science">
        <title>Empirical analysis of transcriptional activity in the Arabidopsis genome.</title>
        <authorList>
            <person name="Yamada K."/>
            <person name="Lim J."/>
            <person name="Dale J.M."/>
            <person name="Chen H."/>
            <person name="Shinn P."/>
            <person name="Palm C.J."/>
            <person name="Southwick A.M."/>
            <person name="Wu H.C."/>
            <person name="Kim C.J."/>
            <person name="Nguyen M."/>
            <person name="Pham P.K."/>
            <person name="Cheuk R.F."/>
            <person name="Karlin-Newmann G."/>
            <person name="Liu S.X."/>
            <person name="Lam B."/>
            <person name="Sakano H."/>
            <person name="Wu T."/>
            <person name="Yu G."/>
            <person name="Miranda M."/>
            <person name="Quach H.L."/>
            <person name="Tripp M."/>
            <person name="Chang C.H."/>
            <person name="Lee J.M."/>
            <person name="Toriumi M.J."/>
            <person name="Chan M.M."/>
            <person name="Tang C.C."/>
            <person name="Onodera C.S."/>
            <person name="Deng J.M."/>
            <person name="Akiyama K."/>
            <person name="Ansari Y."/>
            <person name="Arakawa T."/>
            <person name="Banh J."/>
            <person name="Banno F."/>
            <person name="Bowser L."/>
            <person name="Brooks S.Y."/>
            <person name="Carninci P."/>
            <person name="Chao Q."/>
            <person name="Choy N."/>
            <person name="Enju A."/>
            <person name="Goldsmith A.D."/>
            <person name="Gurjal M."/>
            <person name="Hansen N.F."/>
            <person name="Hayashizaki Y."/>
            <person name="Johnson-Hopson C."/>
            <person name="Hsuan V.W."/>
            <person name="Iida K."/>
            <person name="Karnes M."/>
            <person name="Khan S."/>
            <person name="Koesema E."/>
            <person name="Ishida J."/>
            <person name="Jiang P.X."/>
            <person name="Jones T."/>
            <person name="Kawai J."/>
            <person name="Kamiya A."/>
            <person name="Meyers C."/>
            <person name="Nakajima M."/>
            <person name="Narusaka M."/>
            <person name="Seki M."/>
            <person name="Sakurai T."/>
            <person name="Satou M."/>
            <person name="Tamse R."/>
            <person name="Vaysberg M."/>
            <person name="Wallender E.K."/>
            <person name="Wong C."/>
            <person name="Yamamura Y."/>
            <person name="Yuan S."/>
            <person name="Shinozaki K."/>
            <person name="Davis R.W."/>
            <person name="Theologis A."/>
            <person name="Ecker J.R."/>
        </authorList>
    </citation>
    <scope>NUCLEOTIDE SEQUENCE [LARGE SCALE MRNA]</scope>
    <source>
        <strain>cv. Columbia</strain>
    </source>
</reference>
<reference key="4">
    <citation type="journal article" date="2008" name="Plant Cell">
        <title>IMPa-4, an Arabidopsis importin alpha isoform, is preferentially involved in agrobacterium-mediated plant transformation.</title>
        <authorList>
            <person name="Bhattacharjee S."/>
            <person name="Lee L.Y."/>
            <person name="Oltmanns H."/>
            <person name="Cao H."/>
            <person name="Gupta V."/>
            <person name="Cuperus J."/>
            <person name="Gelvin S.B."/>
        </authorList>
    </citation>
    <scope>FUNCTION</scope>
    <scope>GENE FAMILY</scope>
</reference>
<organism>
    <name type="scientific">Arabidopsis thaliana</name>
    <name type="common">Mouse-ear cress</name>
    <dbReference type="NCBI Taxonomy" id="3702"/>
    <lineage>
        <taxon>Eukaryota</taxon>
        <taxon>Viridiplantae</taxon>
        <taxon>Streptophyta</taxon>
        <taxon>Embryophyta</taxon>
        <taxon>Tracheophyta</taxon>
        <taxon>Spermatophyta</taxon>
        <taxon>Magnoliopsida</taxon>
        <taxon>eudicotyledons</taxon>
        <taxon>Gunneridae</taxon>
        <taxon>Pentapetalae</taxon>
        <taxon>rosids</taxon>
        <taxon>malvids</taxon>
        <taxon>Brassicales</taxon>
        <taxon>Brassicaceae</taxon>
        <taxon>Camelineae</taxon>
        <taxon>Arabidopsis</taxon>
    </lineage>
</organism>